<proteinExistence type="inferred from homology"/>
<keyword id="KW-0285">Flavoprotein</keyword>
<keyword id="KW-0288">FMN</keyword>
<keyword id="KW-0637">Prenyltransferase</keyword>
<keyword id="KW-1185">Reference proteome</keyword>
<keyword id="KW-0808">Transferase</keyword>
<evidence type="ECO:0000255" key="1">
    <source>
        <dbReference type="HAMAP-Rule" id="MF_01984"/>
    </source>
</evidence>
<comment type="function">
    <text evidence="1">Flavin prenyltransferase that catalyzes the synthesis of the prenylated FMN cofactor (prenyl-FMN) for 4-hydroxy-3-polyprenylbenzoic acid decarboxylase UbiD. The prenyltransferase is metal-independent and links a dimethylallyl moiety from dimethylallyl monophosphate (DMAP) to the flavin N5 and C6 atoms of FMN.</text>
</comment>
<comment type="catalytic activity">
    <reaction evidence="1">
        <text>dimethylallyl phosphate + FMNH2 = prenylated FMNH2 + phosphate</text>
        <dbReference type="Rhea" id="RHEA:37743"/>
        <dbReference type="ChEBI" id="CHEBI:43474"/>
        <dbReference type="ChEBI" id="CHEBI:57618"/>
        <dbReference type="ChEBI" id="CHEBI:87467"/>
        <dbReference type="ChEBI" id="CHEBI:88052"/>
        <dbReference type="EC" id="2.5.1.129"/>
    </reaction>
</comment>
<comment type="similarity">
    <text evidence="1">Belongs to the UbiX/PAD1 family.</text>
</comment>
<dbReference type="EC" id="2.5.1.129" evidence="1"/>
<dbReference type="EMBL" id="AL445066">
    <property type="protein sequence ID" value="CAC12227.1"/>
    <property type="molecule type" value="Genomic_DNA"/>
</dbReference>
<dbReference type="RefSeq" id="WP_010901510.1">
    <property type="nucleotide sequence ID" value="NC_002578.1"/>
</dbReference>
<dbReference type="SMR" id="Q9HJ72"/>
<dbReference type="FunCoup" id="Q9HJ72">
    <property type="interactions" value="74"/>
</dbReference>
<dbReference type="STRING" id="273075.gene:9572321"/>
<dbReference type="PaxDb" id="273075-Ta1100"/>
<dbReference type="EnsemblBacteria" id="CAC12227">
    <property type="protein sequence ID" value="CAC12227"/>
    <property type="gene ID" value="CAC12227"/>
</dbReference>
<dbReference type="KEGG" id="tac:Ta1100"/>
<dbReference type="eggNOG" id="arCOG01703">
    <property type="taxonomic scope" value="Archaea"/>
</dbReference>
<dbReference type="HOGENOM" id="CLU_074522_2_1_2"/>
<dbReference type="InParanoid" id="Q9HJ72"/>
<dbReference type="OrthoDB" id="9540at2157"/>
<dbReference type="Proteomes" id="UP000001024">
    <property type="component" value="Chromosome"/>
</dbReference>
<dbReference type="GO" id="GO:0106141">
    <property type="term" value="F:flavin prenyltransferase activity"/>
    <property type="evidence" value="ECO:0007669"/>
    <property type="project" value="UniProtKB-EC"/>
</dbReference>
<dbReference type="FunFam" id="3.40.50.1950:FF:000001">
    <property type="entry name" value="Flavin prenyltransferase UbiX"/>
    <property type="match status" value="1"/>
</dbReference>
<dbReference type="Gene3D" id="3.40.50.1950">
    <property type="entry name" value="Flavin prenyltransferase-like"/>
    <property type="match status" value="1"/>
</dbReference>
<dbReference type="HAMAP" id="MF_01984">
    <property type="entry name" value="ubiX_pad"/>
    <property type="match status" value="1"/>
</dbReference>
<dbReference type="InterPro" id="IPR036551">
    <property type="entry name" value="Flavin_trans-like"/>
</dbReference>
<dbReference type="InterPro" id="IPR003382">
    <property type="entry name" value="Flavoprotein"/>
</dbReference>
<dbReference type="InterPro" id="IPR004507">
    <property type="entry name" value="UbiX-like"/>
</dbReference>
<dbReference type="NCBIfam" id="NF004685">
    <property type="entry name" value="PRK06029.1"/>
    <property type="match status" value="1"/>
</dbReference>
<dbReference type="NCBIfam" id="TIGR00421">
    <property type="entry name" value="ubiX_pad"/>
    <property type="match status" value="1"/>
</dbReference>
<dbReference type="Pfam" id="PF02441">
    <property type="entry name" value="Flavoprotein"/>
    <property type="match status" value="1"/>
</dbReference>
<dbReference type="SUPFAM" id="SSF52507">
    <property type="entry name" value="Homo-oligomeric flavin-containing Cys decarboxylases, HFCD"/>
    <property type="match status" value="1"/>
</dbReference>
<organism>
    <name type="scientific">Thermoplasma acidophilum (strain ATCC 25905 / DSM 1728 / JCM 9062 / NBRC 15155 / AMRC-C165)</name>
    <dbReference type="NCBI Taxonomy" id="273075"/>
    <lineage>
        <taxon>Archaea</taxon>
        <taxon>Methanobacteriati</taxon>
        <taxon>Thermoplasmatota</taxon>
        <taxon>Thermoplasmata</taxon>
        <taxon>Thermoplasmatales</taxon>
        <taxon>Thermoplasmataceae</taxon>
        <taxon>Thermoplasma</taxon>
    </lineage>
</organism>
<gene>
    <name evidence="1" type="primary">ubiX</name>
    <name type="ordered locus">Ta1100</name>
</gene>
<sequence>MRIVVGISGASGIPYAVRFLENLRGHDTYLVISEAAKKVIQYESDENIEYIRSLASHNYEDDDFSAPISSGSFLFDSMVIVPCSITTISKIAAGISDTLITRAAAVSLKERRRLIVVPREMPLSTIDLKNMTYLSENGVIVAPASPGFYTKPKSVDDMVAFVVSRILDLVGVGNDLIKRW</sequence>
<name>UBIX_THEAC</name>
<feature type="chain" id="PRO_0000134983" description="Flavin prenyltransferase UbiX">
    <location>
        <begin position="1"/>
        <end position="180"/>
    </location>
</feature>
<feature type="binding site" evidence="1">
    <location>
        <begin position="9"/>
        <end position="11"/>
    </location>
    <ligand>
        <name>FMN</name>
        <dbReference type="ChEBI" id="CHEBI:58210"/>
    </ligand>
</feature>
<feature type="binding site" evidence="1">
    <location>
        <position position="33"/>
    </location>
    <ligand>
        <name>FMN</name>
        <dbReference type="ChEBI" id="CHEBI:58210"/>
    </ligand>
</feature>
<feature type="binding site" evidence="1">
    <location>
        <begin position="84"/>
        <end position="87"/>
    </location>
    <ligand>
        <name>FMN</name>
        <dbReference type="ChEBI" id="CHEBI:58210"/>
    </ligand>
</feature>
<feature type="binding site" evidence="1">
    <location>
        <position position="119"/>
    </location>
    <ligand>
        <name>FMN</name>
        <dbReference type="ChEBI" id="CHEBI:58210"/>
    </ligand>
</feature>
<feature type="binding site" evidence="1">
    <location>
        <position position="149"/>
    </location>
    <ligand>
        <name>dimethylallyl phosphate</name>
        <dbReference type="ChEBI" id="CHEBI:88052"/>
    </ligand>
</feature>
<feature type="binding site" evidence="1">
    <location>
        <position position="165"/>
    </location>
    <ligand>
        <name>dimethylallyl phosphate</name>
        <dbReference type="ChEBI" id="CHEBI:88052"/>
    </ligand>
</feature>
<accession>Q9HJ72</accession>
<protein>
    <recommendedName>
        <fullName evidence="1">Flavin prenyltransferase UbiX</fullName>
        <ecNumber evidence="1">2.5.1.129</ecNumber>
    </recommendedName>
</protein>
<reference key="1">
    <citation type="journal article" date="2000" name="Nature">
        <title>The genome sequence of the thermoacidophilic scavenger Thermoplasma acidophilum.</title>
        <authorList>
            <person name="Ruepp A."/>
            <person name="Graml W."/>
            <person name="Santos-Martinez M.-L."/>
            <person name="Koretke K.K."/>
            <person name="Volker C."/>
            <person name="Mewes H.-W."/>
            <person name="Frishman D."/>
            <person name="Stocker S."/>
            <person name="Lupas A.N."/>
            <person name="Baumeister W."/>
        </authorList>
    </citation>
    <scope>NUCLEOTIDE SEQUENCE [LARGE SCALE GENOMIC DNA]</scope>
    <source>
        <strain>ATCC 25905 / DSM 1728 / JCM 9062 / NBRC 15155 / AMRC-C165</strain>
    </source>
</reference>